<gene>
    <name type="primary">NSG2</name>
    <name type="ordered locus">YNL156C</name>
    <name type="ORF">N1747</name>
</gene>
<comment type="function">
    <text evidence="4">Stabilizes the HMG-CoA reductase HMG2 by preventing its HRD1-dependent degradation. Binds directly to the sterol-sensing domain (SSD)-containing transmembrane region of HMG2, promoting its folding to protect it from degradation.</text>
</comment>
<comment type="subcellular location">
    <subcellularLocation>
        <location evidence="2 4">Endoplasmic reticulum membrane</location>
        <topology evidence="2 4">Multi-pass membrane protein</topology>
    </subcellularLocation>
</comment>
<comment type="miscellaneous">
    <text evidence="3">Present with 3390 molecules/cell in log phase SD medium.</text>
</comment>
<comment type="similarity">
    <text evidence="5">Belongs to the INSIG family.</text>
</comment>
<protein>
    <recommendedName>
        <fullName>Protein NSG2</fullName>
    </recommendedName>
    <alternativeName>
        <fullName>INSIG homolog 2</fullName>
    </alternativeName>
</protein>
<name>NSG2_YEAST</name>
<feature type="chain" id="PRO_0000203417" description="Protein NSG2">
    <location>
        <begin position="1"/>
        <end position="299"/>
    </location>
</feature>
<feature type="topological domain" description="Cytoplasmic" evidence="1">
    <location>
        <begin position="1"/>
        <end position="108"/>
    </location>
</feature>
<feature type="transmembrane region" description="Helical" evidence="1">
    <location>
        <begin position="109"/>
        <end position="129"/>
    </location>
</feature>
<feature type="topological domain" description="Lumenal" evidence="1">
    <location>
        <begin position="130"/>
        <end position="161"/>
    </location>
</feature>
<feature type="transmembrane region" description="Helical" evidence="1">
    <location>
        <begin position="162"/>
        <end position="182"/>
    </location>
</feature>
<feature type="topological domain" description="Cytoplasmic" evidence="1">
    <location>
        <begin position="183"/>
        <end position="237"/>
    </location>
</feature>
<feature type="transmembrane region" description="Helical" evidence="1">
    <location>
        <begin position="238"/>
        <end position="258"/>
    </location>
</feature>
<feature type="topological domain" description="Lumenal" evidence="1">
    <location>
        <begin position="259"/>
        <end position="268"/>
    </location>
</feature>
<feature type="transmembrane region" description="Helical" evidence="1">
    <location>
        <begin position="269"/>
        <end position="289"/>
    </location>
</feature>
<feature type="topological domain" description="Cytoplasmic" evidence="1">
    <location>
        <begin position="290"/>
        <end position="299"/>
    </location>
</feature>
<feature type="modified residue" description="Phosphoserine" evidence="6 7">
    <location>
        <position position="90"/>
    </location>
</feature>
<evidence type="ECO:0000255" key="1"/>
<evidence type="ECO:0000269" key="2">
    <source>
    </source>
</evidence>
<evidence type="ECO:0000269" key="3">
    <source>
    </source>
</evidence>
<evidence type="ECO:0000269" key="4">
    <source>
    </source>
</evidence>
<evidence type="ECO:0000305" key="5"/>
<evidence type="ECO:0007744" key="6">
    <source>
    </source>
</evidence>
<evidence type="ECO:0007744" key="7">
    <source>
    </source>
</evidence>
<proteinExistence type="evidence at protein level"/>
<reference key="1">
    <citation type="journal article" date="1996" name="Yeast">
        <title>The sequence of 36.8 kb from the left arm of chromosome XIV reveals 24 complete open reading frames: 18 correspond to new genes, one of which encodes a protein similar to the human myotonic dystrophy kinase.</title>
        <authorList>
            <person name="Nasr F."/>
            <person name="Becam A.-M."/>
            <person name="Herbert C.J."/>
        </authorList>
    </citation>
    <scope>NUCLEOTIDE SEQUENCE [GENOMIC DNA]</scope>
    <source>
        <strain>ATCC 96604 / S288c / FY1679</strain>
    </source>
</reference>
<reference key="2">
    <citation type="journal article" date="1997" name="Nature">
        <title>The nucleotide sequence of Saccharomyces cerevisiae chromosome XIV and its evolutionary implications.</title>
        <authorList>
            <person name="Philippsen P."/>
            <person name="Kleine K."/>
            <person name="Poehlmann R."/>
            <person name="Duesterhoeft A."/>
            <person name="Hamberg K."/>
            <person name="Hegemann J.H."/>
            <person name="Obermaier B."/>
            <person name="Urrestarazu L.A."/>
            <person name="Aert R."/>
            <person name="Albermann K."/>
            <person name="Altmann R."/>
            <person name="Andre B."/>
            <person name="Baladron V."/>
            <person name="Ballesta J.P.G."/>
            <person name="Becam A.-M."/>
            <person name="Beinhauer J.D."/>
            <person name="Boskovic J."/>
            <person name="Buitrago M.J."/>
            <person name="Bussereau F."/>
            <person name="Coster F."/>
            <person name="Crouzet M."/>
            <person name="D'Angelo M."/>
            <person name="Dal Pero F."/>
            <person name="De Antoni A."/>
            <person name="del Rey F."/>
            <person name="Doignon F."/>
            <person name="Domdey H."/>
            <person name="Dubois E."/>
            <person name="Fiedler T.A."/>
            <person name="Fleig U."/>
            <person name="Floeth M."/>
            <person name="Fritz C."/>
            <person name="Gaillardin C."/>
            <person name="Garcia-Cantalejo J.M."/>
            <person name="Glansdorff N."/>
            <person name="Goffeau A."/>
            <person name="Gueldener U."/>
            <person name="Herbert C.J."/>
            <person name="Heumann K."/>
            <person name="Heuss-Neitzel D."/>
            <person name="Hilbert H."/>
            <person name="Hinni K."/>
            <person name="Iraqui Houssaini I."/>
            <person name="Jacquet M."/>
            <person name="Jimenez A."/>
            <person name="Jonniaux J.-L."/>
            <person name="Karpfinger-Hartl L."/>
            <person name="Lanfranchi G."/>
            <person name="Lepingle A."/>
            <person name="Levesque H."/>
            <person name="Lyck R."/>
            <person name="Maftahi M."/>
            <person name="Mallet L."/>
            <person name="Maurer C.T.C."/>
            <person name="Messenguy F."/>
            <person name="Mewes H.-W."/>
            <person name="Moestl D."/>
            <person name="Nasr F."/>
            <person name="Nicaud J.-M."/>
            <person name="Niedenthal R.K."/>
            <person name="Pandolfo D."/>
            <person name="Pierard A."/>
            <person name="Piravandi E."/>
            <person name="Planta R.J."/>
            <person name="Pohl T.M."/>
            <person name="Purnelle B."/>
            <person name="Rebischung C."/>
            <person name="Remacha M.A."/>
            <person name="Revuelta J.L."/>
            <person name="Rinke M."/>
            <person name="Saiz J.E."/>
            <person name="Sartorello F."/>
            <person name="Scherens B."/>
            <person name="Sen-Gupta M."/>
            <person name="Soler-Mira A."/>
            <person name="Urbanus J.H.M."/>
            <person name="Valle G."/>
            <person name="Van Dyck L."/>
            <person name="Verhasselt P."/>
            <person name="Vierendeels F."/>
            <person name="Vissers S."/>
            <person name="Voet M."/>
            <person name="Volckaert G."/>
            <person name="Wach A."/>
            <person name="Wambutt R."/>
            <person name="Wedler H."/>
            <person name="Zollner A."/>
            <person name="Hani J."/>
        </authorList>
    </citation>
    <scope>NUCLEOTIDE SEQUENCE [LARGE SCALE GENOMIC DNA]</scope>
    <source>
        <strain>ATCC 204508 / S288c</strain>
    </source>
</reference>
<reference key="3">
    <citation type="journal article" date="2014" name="G3 (Bethesda)">
        <title>The reference genome sequence of Saccharomyces cerevisiae: Then and now.</title>
        <authorList>
            <person name="Engel S.R."/>
            <person name="Dietrich F.S."/>
            <person name="Fisk D.G."/>
            <person name="Binkley G."/>
            <person name="Balakrishnan R."/>
            <person name="Costanzo M.C."/>
            <person name="Dwight S.S."/>
            <person name="Hitz B.C."/>
            <person name="Karra K."/>
            <person name="Nash R.S."/>
            <person name="Weng S."/>
            <person name="Wong E.D."/>
            <person name="Lloyd P."/>
            <person name="Skrzypek M.S."/>
            <person name="Miyasato S.R."/>
            <person name="Simison M."/>
            <person name="Cherry J.M."/>
        </authorList>
    </citation>
    <scope>GENOME REANNOTATION</scope>
    <source>
        <strain>ATCC 204508 / S288c</strain>
    </source>
</reference>
<reference key="4">
    <citation type="journal article" date="2007" name="Genome Res.">
        <title>Approaching a complete repository of sequence-verified protein-encoding clones for Saccharomyces cerevisiae.</title>
        <authorList>
            <person name="Hu Y."/>
            <person name="Rolfs A."/>
            <person name="Bhullar B."/>
            <person name="Murthy T.V.S."/>
            <person name="Zhu C."/>
            <person name="Berger M.F."/>
            <person name="Camargo A.A."/>
            <person name="Kelley F."/>
            <person name="McCarron S."/>
            <person name="Jepson D."/>
            <person name="Richardson A."/>
            <person name="Raphael J."/>
            <person name="Moreira D."/>
            <person name="Taycher E."/>
            <person name="Zuo D."/>
            <person name="Mohr S."/>
            <person name="Kane M.F."/>
            <person name="Williamson J."/>
            <person name="Simpson A.J.G."/>
            <person name="Bulyk M.L."/>
            <person name="Harlow E."/>
            <person name="Marsischky G."/>
            <person name="Kolodner R.D."/>
            <person name="LaBaer J."/>
        </authorList>
    </citation>
    <scope>NUCLEOTIDE SEQUENCE [GENOMIC DNA]</scope>
    <source>
        <strain>ATCC 204508 / S288c</strain>
    </source>
</reference>
<reference key="5">
    <citation type="journal article" date="2003" name="Nature">
        <title>Global analysis of protein localization in budding yeast.</title>
        <authorList>
            <person name="Huh W.-K."/>
            <person name="Falvo J.V."/>
            <person name="Gerke L.C."/>
            <person name="Carroll A.S."/>
            <person name="Howson R.W."/>
            <person name="Weissman J.S."/>
            <person name="O'Shea E.K."/>
        </authorList>
    </citation>
    <scope>SUBCELLULAR LOCATION [LARGE SCALE ANALYSIS]</scope>
</reference>
<reference key="6">
    <citation type="journal article" date="2003" name="Nature">
        <title>Global analysis of protein expression in yeast.</title>
        <authorList>
            <person name="Ghaemmaghami S."/>
            <person name="Huh W.-K."/>
            <person name="Bower K."/>
            <person name="Howson R.W."/>
            <person name="Belle A."/>
            <person name="Dephoure N."/>
            <person name="O'Shea E.K."/>
            <person name="Weissman J.S."/>
        </authorList>
    </citation>
    <scope>LEVEL OF PROTEIN EXPRESSION [LARGE SCALE ANALYSIS]</scope>
</reference>
<reference key="7">
    <citation type="journal article" date="2005" name="EMBO J.">
        <title>INSIG: a broadly conserved transmembrane chaperone for sterol-sensing domain proteins.</title>
        <authorList>
            <person name="Flury I."/>
            <person name="Garza R."/>
            <person name="Shearer A."/>
            <person name="Rosen J."/>
            <person name="Cronin S."/>
            <person name="Hampton R.Y."/>
        </authorList>
    </citation>
    <scope>FUNCTION</scope>
    <scope>SUBCELLULAR LOCATION</scope>
</reference>
<reference key="8">
    <citation type="journal article" date="2006" name="Proc. Natl. Acad. Sci. U.S.A.">
        <title>A global topology map of the Saccharomyces cerevisiae membrane proteome.</title>
        <authorList>
            <person name="Kim H."/>
            <person name="Melen K."/>
            <person name="Oesterberg M."/>
            <person name="von Heijne G."/>
        </authorList>
    </citation>
    <scope>TOPOLOGY [LARGE SCALE ANALYSIS]</scope>
    <source>
        <strain>ATCC 208353 / W303-1A</strain>
    </source>
</reference>
<reference key="9">
    <citation type="journal article" date="2007" name="J. Proteome Res.">
        <title>Large-scale phosphorylation analysis of alpha-factor-arrested Saccharomyces cerevisiae.</title>
        <authorList>
            <person name="Li X."/>
            <person name="Gerber S.A."/>
            <person name="Rudner A.D."/>
            <person name="Beausoleil S.A."/>
            <person name="Haas W."/>
            <person name="Villen J."/>
            <person name="Elias J.E."/>
            <person name="Gygi S.P."/>
        </authorList>
    </citation>
    <scope>PHOSPHORYLATION [LARGE SCALE ANALYSIS] AT SER-90</scope>
    <scope>IDENTIFICATION BY MASS SPECTROMETRY [LARGE SCALE ANALYSIS]</scope>
    <source>
        <strain>ADR376</strain>
    </source>
</reference>
<reference key="10">
    <citation type="journal article" date="2008" name="Mol. Cell. Proteomics">
        <title>A multidimensional chromatography technology for in-depth phosphoproteome analysis.</title>
        <authorList>
            <person name="Albuquerque C.P."/>
            <person name="Smolka M.B."/>
            <person name="Payne S.H."/>
            <person name="Bafna V."/>
            <person name="Eng J."/>
            <person name="Zhou H."/>
        </authorList>
    </citation>
    <scope>IDENTIFICATION BY MASS SPECTROMETRY [LARGE SCALE ANALYSIS]</scope>
</reference>
<reference key="11">
    <citation type="journal article" date="2009" name="Science">
        <title>Global analysis of Cdk1 substrate phosphorylation sites provides insights into evolution.</title>
        <authorList>
            <person name="Holt L.J."/>
            <person name="Tuch B.B."/>
            <person name="Villen J."/>
            <person name="Johnson A.D."/>
            <person name="Gygi S.P."/>
            <person name="Morgan D.O."/>
        </authorList>
    </citation>
    <scope>PHOSPHORYLATION [LARGE SCALE ANALYSIS] AT SER-90</scope>
    <scope>IDENTIFICATION BY MASS SPECTROMETRY [LARGE SCALE ANALYSIS]</scope>
</reference>
<sequence length="299" mass="33667">MANRGEPDPKKSTESICSLTKPQLYSLYDDDVVRSEDNEIYEELKRSVSIDSTKYSRDQTIDSTFYLAHKVGGSLPRNTVSSNNLERILSASSIHENFPSRTRQTRQNILHYLQAVLILSLSGFAYHELSRNLHDNHLLHPDFASRPLLLGVKLCNWLSNGVLPNWLGYGVEGLLFGSVVPILDNIFQTEVVKSSVHHDSLTSVIRSINAMLGVTFGIRKIQWNSSLQAAGAWGLLNIILWLFFDGSISMLMSCICIGVGCCISCYKDIIDGSQFLYFMDFYFLGSLMFGKLGRYLYSH</sequence>
<keyword id="KW-0256">Endoplasmic reticulum</keyword>
<keyword id="KW-0472">Membrane</keyword>
<keyword id="KW-0597">Phosphoprotein</keyword>
<keyword id="KW-1185">Reference proteome</keyword>
<keyword id="KW-0812">Transmembrane</keyword>
<keyword id="KW-1133">Transmembrane helix</keyword>
<organism>
    <name type="scientific">Saccharomyces cerevisiae (strain ATCC 204508 / S288c)</name>
    <name type="common">Baker's yeast</name>
    <dbReference type="NCBI Taxonomy" id="559292"/>
    <lineage>
        <taxon>Eukaryota</taxon>
        <taxon>Fungi</taxon>
        <taxon>Dikarya</taxon>
        <taxon>Ascomycota</taxon>
        <taxon>Saccharomycotina</taxon>
        <taxon>Saccharomycetes</taxon>
        <taxon>Saccharomycetales</taxon>
        <taxon>Saccharomycetaceae</taxon>
        <taxon>Saccharomyces</taxon>
    </lineage>
</organism>
<dbReference type="EMBL" id="X92517">
    <property type="protein sequence ID" value="CAA63283.1"/>
    <property type="molecule type" value="Genomic_DNA"/>
</dbReference>
<dbReference type="EMBL" id="Z71432">
    <property type="protein sequence ID" value="CAA96043.1"/>
    <property type="molecule type" value="Genomic_DNA"/>
</dbReference>
<dbReference type="EMBL" id="AY692695">
    <property type="protein sequence ID" value="AAT92714.1"/>
    <property type="molecule type" value="Genomic_DNA"/>
</dbReference>
<dbReference type="EMBL" id="BK006947">
    <property type="protein sequence ID" value="DAA10393.1"/>
    <property type="molecule type" value="Genomic_DNA"/>
</dbReference>
<dbReference type="PIR" id="S60971">
    <property type="entry name" value="S60971"/>
</dbReference>
<dbReference type="RefSeq" id="NP_014243.3">
    <property type="nucleotide sequence ID" value="NM_001182994.3"/>
</dbReference>
<dbReference type="BioGRID" id="35673">
    <property type="interactions" value="62"/>
</dbReference>
<dbReference type="FunCoup" id="P53898">
    <property type="interactions" value="34"/>
</dbReference>
<dbReference type="IntAct" id="P53898">
    <property type="interactions" value="1"/>
</dbReference>
<dbReference type="MINT" id="P53898"/>
<dbReference type="STRING" id="4932.YNL156C"/>
<dbReference type="iPTMnet" id="P53898"/>
<dbReference type="PaxDb" id="4932-YNL156C"/>
<dbReference type="PeptideAtlas" id="P53898"/>
<dbReference type="TopDownProteomics" id="P53898"/>
<dbReference type="EnsemblFungi" id="YNL156C_mRNA">
    <property type="protein sequence ID" value="YNL156C"/>
    <property type="gene ID" value="YNL156C"/>
</dbReference>
<dbReference type="GeneID" id="855566"/>
<dbReference type="KEGG" id="sce:YNL156C"/>
<dbReference type="AGR" id="SGD:S000005100"/>
<dbReference type="SGD" id="S000005100">
    <property type="gene designation" value="NSG2"/>
</dbReference>
<dbReference type="VEuPathDB" id="FungiDB:YNL156C"/>
<dbReference type="eggNOG" id="ENOG502QX4Q">
    <property type="taxonomic scope" value="Eukaryota"/>
</dbReference>
<dbReference type="GeneTree" id="ENSGT00580000081600"/>
<dbReference type="HOGENOM" id="CLU_088332_0_0_1"/>
<dbReference type="InParanoid" id="P53898"/>
<dbReference type="OMA" id="IEWSSFL"/>
<dbReference type="OrthoDB" id="205546at2759"/>
<dbReference type="BioCyc" id="YEAST:G3O-33172-MONOMER"/>
<dbReference type="BioGRID-ORCS" id="855566">
    <property type="hits" value="3 hits in 10 CRISPR screens"/>
</dbReference>
<dbReference type="PRO" id="PR:P53898"/>
<dbReference type="Proteomes" id="UP000002311">
    <property type="component" value="Chromosome XIV"/>
</dbReference>
<dbReference type="RNAct" id="P53898">
    <property type="molecule type" value="protein"/>
</dbReference>
<dbReference type="GO" id="GO:0005783">
    <property type="term" value="C:endoplasmic reticulum"/>
    <property type="evidence" value="ECO:0007005"/>
    <property type="project" value="SGD"/>
</dbReference>
<dbReference type="GO" id="GO:0005789">
    <property type="term" value="C:endoplasmic reticulum membrane"/>
    <property type="evidence" value="ECO:0007669"/>
    <property type="project" value="UniProtKB-SubCell"/>
</dbReference>
<dbReference type="GO" id="GO:0051082">
    <property type="term" value="F:unfolded protein binding"/>
    <property type="evidence" value="ECO:0000315"/>
    <property type="project" value="SGD"/>
</dbReference>
<dbReference type="GO" id="GO:0016126">
    <property type="term" value="P:sterol biosynthetic process"/>
    <property type="evidence" value="ECO:0000316"/>
    <property type="project" value="SGD"/>
</dbReference>
<dbReference type="InterPro" id="IPR025929">
    <property type="entry name" value="INSIG_fam"/>
</dbReference>
<dbReference type="PANTHER" id="PTHR15301">
    <property type="entry name" value="INSULIN-INDUCED GENE 1"/>
    <property type="match status" value="1"/>
</dbReference>
<dbReference type="PANTHER" id="PTHR15301:SF3">
    <property type="entry name" value="PROTEIN NSG1-RELATED"/>
    <property type="match status" value="1"/>
</dbReference>
<dbReference type="Pfam" id="PF07281">
    <property type="entry name" value="INSIG"/>
    <property type="match status" value="1"/>
</dbReference>
<accession>P53898</accession>
<accession>D6W127</accession>